<reference key="1">
    <citation type="journal article" date="2010" name="Genome Biol.">
        <title>Structure and dynamics of the pan-genome of Streptococcus pneumoniae and closely related species.</title>
        <authorList>
            <person name="Donati C."/>
            <person name="Hiller N.L."/>
            <person name="Tettelin H."/>
            <person name="Muzzi A."/>
            <person name="Croucher N.J."/>
            <person name="Angiuoli S.V."/>
            <person name="Oggioni M."/>
            <person name="Dunning Hotopp J.C."/>
            <person name="Hu F.Z."/>
            <person name="Riley D.R."/>
            <person name="Covacci A."/>
            <person name="Mitchell T.J."/>
            <person name="Bentley S.D."/>
            <person name="Kilian M."/>
            <person name="Ehrlich G.D."/>
            <person name="Rappuoli R."/>
            <person name="Moxon E.R."/>
            <person name="Masignani V."/>
        </authorList>
    </citation>
    <scope>NUCLEOTIDE SEQUENCE [LARGE SCALE GENOMIC DNA]</scope>
    <source>
        <strain>JJA</strain>
    </source>
</reference>
<proteinExistence type="inferred from homology"/>
<gene>
    <name evidence="1" type="primary">metK</name>
    <name type="ordered locus">SPJ_0699</name>
</gene>
<evidence type="ECO:0000255" key="1">
    <source>
        <dbReference type="HAMAP-Rule" id="MF_00086"/>
    </source>
</evidence>
<feature type="chain" id="PRO_1000196730" description="S-adenosylmethionine synthase">
    <location>
        <begin position="1"/>
        <end position="396"/>
    </location>
</feature>
<feature type="region of interest" description="Flexible loop" evidence="1">
    <location>
        <begin position="100"/>
        <end position="110"/>
    </location>
</feature>
<feature type="binding site" description="in other chain" evidence="1">
    <location>
        <position position="16"/>
    </location>
    <ligand>
        <name>ATP</name>
        <dbReference type="ChEBI" id="CHEBI:30616"/>
        <note>ligand shared between two neighboring subunits</note>
    </ligand>
</feature>
<feature type="binding site" evidence="1">
    <location>
        <position position="18"/>
    </location>
    <ligand>
        <name>Mg(2+)</name>
        <dbReference type="ChEBI" id="CHEBI:18420"/>
    </ligand>
</feature>
<feature type="binding site" evidence="1">
    <location>
        <position position="44"/>
    </location>
    <ligand>
        <name>K(+)</name>
        <dbReference type="ChEBI" id="CHEBI:29103"/>
    </ligand>
</feature>
<feature type="binding site" description="in other chain" evidence="1">
    <location>
        <position position="57"/>
    </location>
    <ligand>
        <name>L-methionine</name>
        <dbReference type="ChEBI" id="CHEBI:57844"/>
        <note>ligand shared between two neighboring subunits</note>
    </ligand>
</feature>
<feature type="binding site" description="in other chain" evidence="1">
    <location>
        <position position="100"/>
    </location>
    <ligand>
        <name>L-methionine</name>
        <dbReference type="ChEBI" id="CHEBI:57844"/>
        <note>ligand shared between two neighboring subunits</note>
    </ligand>
</feature>
<feature type="binding site" description="in other chain" evidence="1">
    <location>
        <begin position="175"/>
        <end position="177"/>
    </location>
    <ligand>
        <name>ATP</name>
        <dbReference type="ChEBI" id="CHEBI:30616"/>
        <note>ligand shared between two neighboring subunits</note>
    </ligand>
</feature>
<feature type="binding site" description="in other chain" evidence="1">
    <location>
        <begin position="242"/>
        <end position="243"/>
    </location>
    <ligand>
        <name>ATP</name>
        <dbReference type="ChEBI" id="CHEBI:30616"/>
        <note>ligand shared between two neighboring subunits</note>
    </ligand>
</feature>
<feature type="binding site" evidence="1">
    <location>
        <position position="251"/>
    </location>
    <ligand>
        <name>ATP</name>
        <dbReference type="ChEBI" id="CHEBI:30616"/>
        <note>ligand shared between two neighboring subunits</note>
    </ligand>
</feature>
<feature type="binding site" evidence="1">
    <location>
        <position position="251"/>
    </location>
    <ligand>
        <name>L-methionine</name>
        <dbReference type="ChEBI" id="CHEBI:57844"/>
        <note>ligand shared between two neighboring subunits</note>
    </ligand>
</feature>
<feature type="binding site" description="in other chain" evidence="1">
    <location>
        <begin position="257"/>
        <end position="258"/>
    </location>
    <ligand>
        <name>ATP</name>
        <dbReference type="ChEBI" id="CHEBI:30616"/>
        <note>ligand shared between two neighboring subunits</note>
    </ligand>
</feature>
<feature type="binding site" evidence="1">
    <location>
        <position position="274"/>
    </location>
    <ligand>
        <name>ATP</name>
        <dbReference type="ChEBI" id="CHEBI:30616"/>
        <note>ligand shared between two neighboring subunits</note>
    </ligand>
</feature>
<feature type="binding site" evidence="1">
    <location>
        <position position="278"/>
    </location>
    <ligand>
        <name>ATP</name>
        <dbReference type="ChEBI" id="CHEBI:30616"/>
        <note>ligand shared between two neighboring subunits</note>
    </ligand>
</feature>
<feature type="binding site" description="in other chain" evidence="1">
    <location>
        <position position="282"/>
    </location>
    <ligand>
        <name>L-methionine</name>
        <dbReference type="ChEBI" id="CHEBI:57844"/>
        <note>ligand shared between two neighboring subunits</note>
    </ligand>
</feature>
<comment type="function">
    <text evidence="1">Catalyzes the formation of S-adenosylmethionine (AdoMet) from methionine and ATP. The overall synthetic reaction is composed of two sequential steps, AdoMet formation and the subsequent tripolyphosphate hydrolysis which occurs prior to release of AdoMet from the enzyme.</text>
</comment>
<comment type="catalytic activity">
    <reaction evidence="1">
        <text>L-methionine + ATP + H2O = S-adenosyl-L-methionine + phosphate + diphosphate</text>
        <dbReference type="Rhea" id="RHEA:21080"/>
        <dbReference type="ChEBI" id="CHEBI:15377"/>
        <dbReference type="ChEBI" id="CHEBI:30616"/>
        <dbReference type="ChEBI" id="CHEBI:33019"/>
        <dbReference type="ChEBI" id="CHEBI:43474"/>
        <dbReference type="ChEBI" id="CHEBI:57844"/>
        <dbReference type="ChEBI" id="CHEBI:59789"/>
        <dbReference type="EC" id="2.5.1.6"/>
    </reaction>
</comment>
<comment type="cofactor">
    <cofactor evidence="1">
        <name>Mg(2+)</name>
        <dbReference type="ChEBI" id="CHEBI:18420"/>
    </cofactor>
    <text evidence="1">Binds 2 divalent ions per subunit.</text>
</comment>
<comment type="cofactor">
    <cofactor evidence="1">
        <name>K(+)</name>
        <dbReference type="ChEBI" id="CHEBI:29103"/>
    </cofactor>
    <text evidence="1">Binds 1 potassium ion per subunit.</text>
</comment>
<comment type="pathway">
    <text evidence="1">Amino-acid biosynthesis; S-adenosyl-L-methionine biosynthesis; S-adenosyl-L-methionine from L-methionine: step 1/1.</text>
</comment>
<comment type="subunit">
    <text evidence="1">Homotetramer; dimer of dimers.</text>
</comment>
<comment type="subcellular location">
    <subcellularLocation>
        <location evidence="1">Cytoplasm</location>
    </subcellularLocation>
</comment>
<comment type="similarity">
    <text evidence="1">Belongs to the AdoMet synthase family.</text>
</comment>
<name>METK_STRZJ</name>
<protein>
    <recommendedName>
        <fullName evidence="1">S-adenosylmethionine synthase</fullName>
        <shortName evidence="1">AdoMet synthase</shortName>
        <ecNumber evidence="1">2.5.1.6</ecNumber>
    </recommendedName>
    <alternativeName>
        <fullName evidence="1">MAT</fullName>
    </alternativeName>
    <alternativeName>
        <fullName evidence="1">Methionine adenosyltransferase</fullName>
    </alternativeName>
</protein>
<keyword id="KW-0067">ATP-binding</keyword>
<keyword id="KW-0963">Cytoplasm</keyword>
<keyword id="KW-0460">Magnesium</keyword>
<keyword id="KW-0479">Metal-binding</keyword>
<keyword id="KW-0547">Nucleotide-binding</keyword>
<keyword id="KW-0554">One-carbon metabolism</keyword>
<keyword id="KW-0630">Potassium</keyword>
<keyword id="KW-0808">Transferase</keyword>
<dbReference type="EC" id="2.5.1.6" evidence="1"/>
<dbReference type="EMBL" id="CP000919">
    <property type="protein sequence ID" value="ACO18473.1"/>
    <property type="molecule type" value="Genomic_DNA"/>
</dbReference>
<dbReference type="RefSeq" id="WP_000003930.1">
    <property type="nucleotide sequence ID" value="NC_012466.1"/>
</dbReference>
<dbReference type="SMR" id="C1CDB0"/>
<dbReference type="KEGG" id="sjj:SPJ_0699"/>
<dbReference type="HOGENOM" id="CLU_041802_1_1_9"/>
<dbReference type="UniPathway" id="UPA00315">
    <property type="reaction ID" value="UER00080"/>
</dbReference>
<dbReference type="Proteomes" id="UP000002206">
    <property type="component" value="Chromosome"/>
</dbReference>
<dbReference type="GO" id="GO:0005737">
    <property type="term" value="C:cytoplasm"/>
    <property type="evidence" value="ECO:0007669"/>
    <property type="project" value="UniProtKB-SubCell"/>
</dbReference>
<dbReference type="GO" id="GO:0005524">
    <property type="term" value="F:ATP binding"/>
    <property type="evidence" value="ECO:0007669"/>
    <property type="project" value="UniProtKB-UniRule"/>
</dbReference>
<dbReference type="GO" id="GO:0000287">
    <property type="term" value="F:magnesium ion binding"/>
    <property type="evidence" value="ECO:0007669"/>
    <property type="project" value="UniProtKB-UniRule"/>
</dbReference>
<dbReference type="GO" id="GO:0004478">
    <property type="term" value="F:methionine adenosyltransferase activity"/>
    <property type="evidence" value="ECO:0007669"/>
    <property type="project" value="UniProtKB-UniRule"/>
</dbReference>
<dbReference type="GO" id="GO:0006730">
    <property type="term" value="P:one-carbon metabolic process"/>
    <property type="evidence" value="ECO:0007669"/>
    <property type="project" value="UniProtKB-KW"/>
</dbReference>
<dbReference type="GO" id="GO:0006556">
    <property type="term" value="P:S-adenosylmethionine biosynthetic process"/>
    <property type="evidence" value="ECO:0007669"/>
    <property type="project" value="UniProtKB-UniRule"/>
</dbReference>
<dbReference type="CDD" id="cd18079">
    <property type="entry name" value="S-AdoMet_synt"/>
    <property type="match status" value="1"/>
</dbReference>
<dbReference type="FunFam" id="3.30.300.10:FF:000003">
    <property type="entry name" value="S-adenosylmethionine synthase"/>
    <property type="match status" value="1"/>
</dbReference>
<dbReference type="Gene3D" id="3.30.300.10">
    <property type="match status" value="3"/>
</dbReference>
<dbReference type="HAMAP" id="MF_00086">
    <property type="entry name" value="S_AdoMet_synth1"/>
    <property type="match status" value="1"/>
</dbReference>
<dbReference type="InterPro" id="IPR022631">
    <property type="entry name" value="ADOMET_SYNTHASE_CS"/>
</dbReference>
<dbReference type="InterPro" id="IPR022630">
    <property type="entry name" value="S-AdoMet_synt_C"/>
</dbReference>
<dbReference type="InterPro" id="IPR022629">
    <property type="entry name" value="S-AdoMet_synt_central"/>
</dbReference>
<dbReference type="InterPro" id="IPR022628">
    <property type="entry name" value="S-AdoMet_synt_N"/>
</dbReference>
<dbReference type="InterPro" id="IPR002133">
    <property type="entry name" value="S-AdoMet_synthetase"/>
</dbReference>
<dbReference type="InterPro" id="IPR022636">
    <property type="entry name" value="S-AdoMet_synthetase_sfam"/>
</dbReference>
<dbReference type="NCBIfam" id="TIGR01034">
    <property type="entry name" value="metK"/>
    <property type="match status" value="1"/>
</dbReference>
<dbReference type="PANTHER" id="PTHR11964">
    <property type="entry name" value="S-ADENOSYLMETHIONINE SYNTHETASE"/>
    <property type="match status" value="1"/>
</dbReference>
<dbReference type="Pfam" id="PF02773">
    <property type="entry name" value="S-AdoMet_synt_C"/>
    <property type="match status" value="1"/>
</dbReference>
<dbReference type="Pfam" id="PF02772">
    <property type="entry name" value="S-AdoMet_synt_M"/>
    <property type="match status" value="1"/>
</dbReference>
<dbReference type="Pfam" id="PF00438">
    <property type="entry name" value="S-AdoMet_synt_N"/>
    <property type="match status" value="1"/>
</dbReference>
<dbReference type="PIRSF" id="PIRSF000497">
    <property type="entry name" value="MAT"/>
    <property type="match status" value="1"/>
</dbReference>
<dbReference type="SUPFAM" id="SSF55973">
    <property type="entry name" value="S-adenosylmethionine synthetase"/>
    <property type="match status" value="3"/>
</dbReference>
<dbReference type="PROSITE" id="PS00376">
    <property type="entry name" value="ADOMET_SYNTHASE_1"/>
    <property type="match status" value="1"/>
</dbReference>
<dbReference type="PROSITE" id="PS00377">
    <property type="entry name" value="ADOMET_SYNTHASE_2"/>
    <property type="match status" value="1"/>
</dbReference>
<accession>C1CDB0</accession>
<sequence>MSERKLFTSESVSEGHPDKIADQISDAILDAILAKDPEAHVAAETAVYTGSVHVFGEISTNAYVDINRVVRDTIAEIGYTNTEYGFSAETVGVHPSLVEQSPDIAQGVNEALEVRGNADQDPLDLIGAGDQGLMFGFAVDETEELMPLPIALSHKLVRRLAELRKSEEISYLRPDAKSQVTVEYDENDRPVRVDTVVISTQHDPEATNEQIHQDVIKKVIKEVIPSSYLDDKTKFFINPTGRFVIGGPQGDSGLTGRKIIVDTYGGYSRHGGGAFSGKDATKVDRSASYAARYIAKNIVAADLAKKAEVQLAYAIGVAQPVSVRIDTFGTGTVAESQLEKAARQIFDLRPAGIIQMLDLKRPIYRQTSAYGHMGRTDIDLPWERLDKVDALKEAVK</sequence>
<organism>
    <name type="scientific">Streptococcus pneumoniae (strain JJA)</name>
    <dbReference type="NCBI Taxonomy" id="488222"/>
    <lineage>
        <taxon>Bacteria</taxon>
        <taxon>Bacillati</taxon>
        <taxon>Bacillota</taxon>
        <taxon>Bacilli</taxon>
        <taxon>Lactobacillales</taxon>
        <taxon>Streptococcaceae</taxon>
        <taxon>Streptococcus</taxon>
    </lineage>
</organism>